<dbReference type="EMBL" id="CP000387">
    <property type="protein sequence ID" value="ABN43594.1"/>
    <property type="molecule type" value="Genomic_DNA"/>
</dbReference>
<dbReference type="RefSeq" id="WP_001118385.1">
    <property type="nucleotide sequence ID" value="NZ_CAXTYR010000005.1"/>
</dbReference>
<dbReference type="RefSeq" id="YP_001034144.1">
    <property type="nucleotide sequence ID" value="NC_009009.1"/>
</dbReference>
<dbReference type="SMR" id="A3CK89"/>
<dbReference type="STRING" id="388919.SSA_0131"/>
<dbReference type="GeneID" id="93964226"/>
<dbReference type="KEGG" id="ssa:SSA_0131"/>
<dbReference type="PATRIC" id="fig|388919.9.peg.126"/>
<dbReference type="eggNOG" id="COG0100">
    <property type="taxonomic scope" value="Bacteria"/>
</dbReference>
<dbReference type="HOGENOM" id="CLU_072439_5_0_9"/>
<dbReference type="OrthoDB" id="9806415at2"/>
<dbReference type="PRO" id="PR:A3CK89"/>
<dbReference type="Proteomes" id="UP000002148">
    <property type="component" value="Chromosome"/>
</dbReference>
<dbReference type="GO" id="GO:1990904">
    <property type="term" value="C:ribonucleoprotein complex"/>
    <property type="evidence" value="ECO:0007669"/>
    <property type="project" value="UniProtKB-KW"/>
</dbReference>
<dbReference type="GO" id="GO:0005840">
    <property type="term" value="C:ribosome"/>
    <property type="evidence" value="ECO:0007669"/>
    <property type="project" value="UniProtKB-KW"/>
</dbReference>
<dbReference type="GO" id="GO:0019843">
    <property type="term" value="F:rRNA binding"/>
    <property type="evidence" value="ECO:0007669"/>
    <property type="project" value="UniProtKB-UniRule"/>
</dbReference>
<dbReference type="GO" id="GO:0003735">
    <property type="term" value="F:structural constituent of ribosome"/>
    <property type="evidence" value="ECO:0007669"/>
    <property type="project" value="InterPro"/>
</dbReference>
<dbReference type="GO" id="GO:0006412">
    <property type="term" value="P:translation"/>
    <property type="evidence" value="ECO:0007669"/>
    <property type="project" value="UniProtKB-UniRule"/>
</dbReference>
<dbReference type="FunFam" id="3.30.420.80:FF:000001">
    <property type="entry name" value="30S ribosomal protein S11"/>
    <property type="match status" value="1"/>
</dbReference>
<dbReference type="Gene3D" id="3.30.420.80">
    <property type="entry name" value="Ribosomal protein S11"/>
    <property type="match status" value="1"/>
</dbReference>
<dbReference type="HAMAP" id="MF_01310">
    <property type="entry name" value="Ribosomal_uS11"/>
    <property type="match status" value="1"/>
</dbReference>
<dbReference type="InterPro" id="IPR001971">
    <property type="entry name" value="Ribosomal_uS11"/>
</dbReference>
<dbReference type="InterPro" id="IPR019981">
    <property type="entry name" value="Ribosomal_uS11_bac-type"/>
</dbReference>
<dbReference type="InterPro" id="IPR018102">
    <property type="entry name" value="Ribosomal_uS11_CS"/>
</dbReference>
<dbReference type="InterPro" id="IPR036967">
    <property type="entry name" value="Ribosomal_uS11_sf"/>
</dbReference>
<dbReference type="NCBIfam" id="NF003698">
    <property type="entry name" value="PRK05309.1"/>
    <property type="match status" value="1"/>
</dbReference>
<dbReference type="NCBIfam" id="TIGR03632">
    <property type="entry name" value="uS11_bact"/>
    <property type="match status" value="1"/>
</dbReference>
<dbReference type="PANTHER" id="PTHR11759">
    <property type="entry name" value="40S RIBOSOMAL PROTEIN S14/30S RIBOSOMAL PROTEIN S11"/>
    <property type="match status" value="1"/>
</dbReference>
<dbReference type="Pfam" id="PF00411">
    <property type="entry name" value="Ribosomal_S11"/>
    <property type="match status" value="1"/>
</dbReference>
<dbReference type="PIRSF" id="PIRSF002131">
    <property type="entry name" value="Ribosomal_S11"/>
    <property type="match status" value="1"/>
</dbReference>
<dbReference type="SUPFAM" id="SSF53137">
    <property type="entry name" value="Translational machinery components"/>
    <property type="match status" value="1"/>
</dbReference>
<dbReference type="PROSITE" id="PS00054">
    <property type="entry name" value="RIBOSOMAL_S11"/>
    <property type="match status" value="1"/>
</dbReference>
<proteinExistence type="inferred from homology"/>
<organism>
    <name type="scientific">Streptococcus sanguinis (strain SK36)</name>
    <dbReference type="NCBI Taxonomy" id="388919"/>
    <lineage>
        <taxon>Bacteria</taxon>
        <taxon>Bacillati</taxon>
        <taxon>Bacillota</taxon>
        <taxon>Bacilli</taxon>
        <taxon>Lactobacillales</taxon>
        <taxon>Streptococcaceae</taxon>
        <taxon>Streptococcus</taxon>
    </lineage>
</organism>
<sequence length="127" mass="13385">MAKPTRKRRVKKNIESGIAHIHATFNNTIVMITDVHGNAIAWSSAGALGFKGSRKSTPFAAQMASEAAAKSAQEHGLKSVEVTVKGPGSGRESAIRALAAAGLEVTAIRDVTPVPHNGARPPKRRRV</sequence>
<comment type="function">
    <text evidence="1">Located on the platform of the 30S subunit, it bridges several disparate RNA helices of the 16S rRNA. Forms part of the Shine-Dalgarno cleft in the 70S ribosome.</text>
</comment>
<comment type="subunit">
    <text evidence="1">Part of the 30S ribosomal subunit. Interacts with proteins S7 and S18. Binds to IF-3.</text>
</comment>
<comment type="similarity">
    <text evidence="1">Belongs to the universal ribosomal protein uS11 family.</text>
</comment>
<protein>
    <recommendedName>
        <fullName evidence="1">Small ribosomal subunit protein uS11</fullName>
    </recommendedName>
    <alternativeName>
        <fullName evidence="2">30S ribosomal protein S11</fullName>
    </alternativeName>
</protein>
<gene>
    <name evidence="1" type="primary">rpsK</name>
    <name type="ordered locus">SSA_0131</name>
</gene>
<keyword id="KW-1185">Reference proteome</keyword>
<keyword id="KW-0687">Ribonucleoprotein</keyword>
<keyword id="KW-0689">Ribosomal protein</keyword>
<keyword id="KW-0694">RNA-binding</keyword>
<keyword id="KW-0699">rRNA-binding</keyword>
<feature type="chain" id="PRO_0000294869" description="Small ribosomal subunit protein uS11">
    <location>
        <begin position="1"/>
        <end position="127"/>
    </location>
</feature>
<accession>A3CK89</accession>
<name>RS11_STRSV</name>
<reference key="1">
    <citation type="journal article" date="2007" name="J. Bacteriol.">
        <title>Genome of the opportunistic pathogen Streptococcus sanguinis.</title>
        <authorList>
            <person name="Xu P."/>
            <person name="Alves J.M."/>
            <person name="Kitten T."/>
            <person name="Brown A."/>
            <person name="Chen Z."/>
            <person name="Ozaki L.S."/>
            <person name="Manque P."/>
            <person name="Ge X."/>
            <person name="Serrano M.G."/>
            <person name="Puiu D."/>
            <person name="Hendricks S."/>
            <person name="Wang Y."/>
            <person name="Chaplin M.D."/>
            <person name="Akan D."/>
            <person name="Paik S."/>
            <person name="Peterson D.L."/>
            <person name="Macrina F.L."/>
            <person name="Buck G.A."/>
        </authorList>
    </citation>
    <scope>NUCLEOTIDE SEQUENCE [LARGE SCALE GENOMIC DNA]</scope>
    <source>
        <strain>SK36</strain>
    </source>
</reference>
<evidence type="ECO:0000255" key="1">
    <source>
        <dbReference type="HAMAP-Rule" id="MF_01310"/>
    </source>
</evidence>
<evidence type="ECO:0000305" key="2"/>